<protein>
    <recommendedName>
        <fullName evidence="1">Elongation factor Ts</fullName>
        <shortName evidence="1">EF-Ts</shortName>
    </recommendedName>
</protein>
<accession>B4SUZ9</accession>
<evidence type="ECO:0000255" key="1">
    <source>
        <dbReference type="HAMAP-Rule" id="MF_00050"/>
    </source>
</evidence>
<proteinExistence type="inferred from homology"/>
<reference key="1">
    <citation type="journal article" date="2011" name="J. Bacteriol.">
        <title>Comparative genomics of 28 Salmonella enterica isolates: evidence for CRISPR-mediated adaptive sublineage evolution.</title>
        <authorList>
            <person name="Fricke W.F."/>
            <person name="Mammel M.K."/>
            <person name="McDermott P.F."/>
            <person name="Tartera C."/>
            <person name="White D.G."/>
            <person name="Leclerc J.E."/>
            <person name="Ravel J."/>
            <person name="Cebula T.A."/>
        </authorList>
    </citation>
    <scope>NUCLEOTIDE SEQUENCE [LARGE SCALE GENOMIC DNA]</scope>
    <source>
        <strain>SL254</strain>
    </source>
</reference>
<keyword id="KW-0963">Cytoplasm</keyword>
<keyword id="KW-0251">Elongation factor</keyword>
<keyword id="KW-0648">Protein biosynthesis</keyword>
<organism>
    <name type="scientific">Salmonella newport (strain SL254)</name>
    <dbReference type="NCBI Taxonomy" id="423368"/>
    <lineage>
        <taxon>Bacteria</taxon>
        <taxon>Pseudomonadati</taxon>
        <taxon>Pseudomonadota</taxon>
        <taxon>Gammaproteobacteria</taxon>
        <taxon>Enterobacterales</taxon>
        <taxon>Enterobacteriaceae</taxon>
        <taxon>Salmonella</taxon>
    </lineage>
</organism>
<dbReference type="EMBL" id="CP001113">
    <property type="protein sequence ID" value="ACF62129.1"/>
    <property type="molecule type" value="Genomic_DNA"/>
</dbReference>
<dbReference type="RefSeq" id="WP_000808106.1">
    <property type="nucleotide sequence ID" value="NZ_CCMR01000003.1"/>
</dbReference>
<dbReference type="SMR" id="B4SUZ9"/>
<dbReference type="KEGG" id="see:SNSL254_A0239"/>
<dbReference type="HOGENOM" id="CLU_047155_0_2_6"/>
<dbReference type="Proteomes" id="UP000008824">
    <property type="component" value="Chromosome"/>
</dbReference>
<dbReference type="GO" id="GO:0005737">
    <property type="term" value="C:cytoplasm"/>
    <property type="evidence" value="ECO:0007669"/>
    <property type="project" value="UniProtKB-SubCell"/>
</dbReference>
<dbReference type="GO" id="GO:0003746">
    <property type="term" value="F:translation elongation factor activity"/>
    <property type="evidence" value="ECO:0007669"/>
    <property type="project" value="UniProtKB-UniRule"/>
</dbReference>
<dbReference type="CDD" id="cd14275">
    <property type="entry name" value="UBA_EF-Ts"/>
    <property type="match status" value="1"/>
</dbReference>
<dbReference type="FunFam" id="1.10.286.20:FF:000001">
    <property type="entry name" value="Elongation factor Ts"/>
    <property type="match status" value="1"/>
</dbReference>
<dbReference type="FunFam" id="1.10.8.10:FF:000001">
    <property type="entry name" value="Elongation factor Ts"/>
    <property type="match status" value="1"/>
</dbReference>
<dbReference type="FunFam" id="3.30.479.20:FF:000001">
    <property type="entry name" value="Elongation factor Ts"/>
    <property type="match status" value="1"/>
</dbReference>
<dbReference type="Gene3D" id="1.10.286.20">
    <property type="match status" value="1"/>
</dbReference>
<dbReference type="Gene3D" id="1.10.8.10">
    <property type="entry name" value="DNA helicase RuvA subunit, C-terminal domain"/>
    <property type="match status" value="1"/>
</dbReference>
<dbReference type="Gene3D" id="3.30.479.20">
    <property type="entry name" value="Elongation factor Ts, dimerisation domain"/>
    <property type="match status" value="2"/>
</dbReference>
<dbReference type="HAMAP" id="MF_00050">
    <property type="entry name" value="EF_Ts"/>
    <property type="match status" value="1"/>
</dbReference>
<dbReference type="InterPro" id="IPR036402">
    <property type="entry name" value="EF-Ts_dimer_sf"/>
</dbReference>
<dbReference type="InterPro" id="IPR001816">
    <property type="entry name" value="Transl_elong_EFTs/EF1B"/>
</dbReference>
<dbReference type="InterPro" id="IPR014039">
    <property type="entry name" value="Transl_elong_EFTs/EF1B_dimer"/>
</dbReference>
<dbReference type="InterPro" id="IPR018101">
    <property type="entry name" value="Transl_elong_Ts_CS"/>
</dbReference>
<dbReference type="InterPro" id="IPR009060">
    <property type="entry name" value="UBA-like_sf"/>
</dbReference>
<dbReference type="NCBIfam" id="TIGR00116">
    <property type="entry name" value="tsf"/>
    <property type="match status" value="1"/>
</dbReference>
<dbReference type="PANTHER" id="PTHR11741">
    <property type="entry name" value="ELONGATION FACTOR TS"/>
    <property type="match status" value="1"/>
</dbReference>
<dbReference type="PANTHER" id="PTHR11741:SF0">
    <property type="entry name" value="ELONGATION FACTOR TS, MITOCHONDRIAL"/>
    <property type="match status" value="1"/>
</dbReference>
<dbReference type="Pfam" id="PF00889">
    <property type="entry name" value="EF_TS"/>
    <property type="match status" value="1"/>
</dbReference>
<dbReference type="SUPFAM" id="SSF54713">
    <property type="entry name" value="Elongation factor Ts (EF-Ts), dimerisation domain"/>
    <property type="match status" value="2"/>
</dbReference>
<dbReference type="SUPFAM" id="SSF46934">
    <property type="entry name" value="UBA-like"/>
    <property type="match status" value="1"/>
</dbReference>
<dbReference type="PROSITE" id="PS01126">
    <property type="entry name" value="EF_TS_1"/>
    <property type="match status" value="1"/>
</dbReference>
<dbReference type="PROSITE" id="PS01127">
    <property type="entry name" value="EF_TS_2"/>
    <property type="match status" value="1"/>
</dbReference>
<feature type="chain" id="PRO_1000116786" description="Elongation factor Ts">
    <location>
        <begin position="1"/>
        <end position="283"/>
    </location>
</feature>
<feature type="region of interest" description="Involved in Mg(2+) ion dislocation from EF-Tu" evidence="1">
    <location>
        <begin position="80"/>
        <end position="83"/>
    </location>
</feature>
<name>EFTS_SALNS</name>
<sequence length="283" mass="30358">MAEITASLVKELRERTGAGMMDCKKALTEANGDIELAIENMRKSGAIKAAKKAGNVAADGVIKTKIDGNVAFILEVNCQTDFVAKDAGFQAFADKVLDAAVAGKITDVEVLKAQFEEERVALVAKIGENINIRRVASLEGDVLGSYQHGARIGVLVAAKGADEELVKQLAMHVAASKPEFVKPEDVSADVVEKEYQVQLDIAMQSGKPKEIAEKMVEGRMKKFTGEVSLTGQPFVMEPSKSVGQLLKEHNADVTGFIRFEVGEGIEKVETDFAAEVAAMSKQS</sequence>
<gene>
    <name evidence="1" type="primary">tsf</name>
    <name type="ordered locus">SNSL254_A0239</name>
</gene>
<comment type="function">
    <text evidence="1">Associates with the EF-Tu.GDP complex and induces the exchange of GDP to GTP. It remains bound to the aminoacyl-tRNA.EF-Tu.GTP complex up to the GTP hydrolysis stage on the ribosome.</text>
</comment>
<comment type="subcellular location">
    <subcellularLocation>
        <location evidence="1">Cytoplasm</location>
    </subcellularLocation>
</comment>
<comment type="similarity">
    <text evidence="1">Belongs to the EF-Ts family.</text>
</comment>